<feature type="chain" id="PRO_0000330401" description="HssA/B-like protein 32">
    <location>
        <begin position="1"/>
        <end position="97"/>
    </location>
</feature>
<feature type="region of interest" description="Disordered" evidence="1">
    <location>
        <begin position="1"/>
        <end position="23"/>
    </location>
</feature>
<feature type="region of interest" description="Disordered" evidence="1">
    <location>
        <begin position="62"/>
        <end position="97"/>
    </location>
</feature>
<feature type="compositionally biased region" description="Gly residues" evidence="1">
    <location>
        <begin position="62"/>
        <end position="74"/>
    </location>
</feature>
<feature type="compositionally biased region" description="Basic residues" evidence="1">
    <location>
        <begin position="75"/>
        <end position="88"/>
    </location>
</feature>
<sequence length="97" mass="8704">MTLFSSISSMSSSMTSSKSSLASFGIGTSMGSNSIACSVGSGSCGSGSGSGSGGCGDLTGGAKSSGGSCGGKGGSHNHGHGHGPHGHGGKGSGGSCS</sequence>
<evidence type="ECO:0000256" key="1">
    <source>
        <dbReference type="SAM" id="MobiDB-lite"/>
    </source>
</evidence>
<evidence type="ECO:0000305" key="2"/>
<reference key="1">
    <citation type="journal article" date="2005" name="Nature">
        <title>The genome of the social amoeba Dictyostelium discoideum.</title>
        <authorList>
            <person name="Eichinger L."/>
            <person name="Pachebat J.A."/>
            <person name="Gloeckner G."/>
            <person name="Rajandream M.A."/>
            <person name="Sucgang R."/>
            <person name="Berriman M."/>
            <person name="Song J."/>
            <person name="Olsen R."/>
            <person name="Szafranski K."/>
            <person name="Xu Q."/>
            <person name="Tunggal B."/>
            <person name="Kummerfeld S."/>
            <person name="Madera M."/>
            <person name="Konfortov B.A."/>
            <person name="Rivero F."/>
            <person name="Bankier A.T."/>
            <person name="Lehmann R."/>
            <person name="Hamlin N."/>
            <person name="Davies R."/>
            <person name="Gaudet P."/>
            <person name="Fey P."/>
            <person name="Pilcher K."/>
            <person name="Chen G."/>
            <person name="Saunders D."/>
            <person name="Sodergren E.J."/>
            <person name="Davis P."/>
            <person name="Kerhornou A."/>
            <person name="Nie X."/>
            <person name="Hall N."/>
            <person name="Anjard C."/>
            <person name="Hemphill L."/>
            <person name="Bason N."/>
            <person name="Farbrother P."/>
            <person name="Desany B."/>
            <person name="Just E."/>
            <person name="Morio T."/>
            <person name="Rost R."/>
            <person name="Churcher C.M."/>
            <person name="Cooper J."/>
            <person name="Haydock S."/>
            <person name="van Driessche N."/>
            <person name="Cronin A."/>
            <person name="Goodhead I."/>
            <person name="Muzny D.M."/>
            <person name="Mourier T."/>
            <person name="Pain A."/>
            <person name="Lu M."/>
            <person name="Harper D."/>
            <person name="Lindsay R."/>
            <person name="Hauser H."/>
            <person name="James K.D."/>
            <person name="Quiles M."/>
            <person name="Madan Babu M."/>
            <person name="Saito T."/>
            <person name="Buchrieser C."/>
            <person name="Wardroper A."/>
            <person name="Felder M."/>
            <person name="Thangavelu M."/>
            <person name="Johnson D."/>
            <person name="Knights A."/>
            <person name="Loulseged H."/>
            <person name="Mungall K.L."/>
            <person name="Oliver K."/>
            <person name="Price C."/>
            <person name="Quail M.A."/>
            <person name="Urushihara H."/>
            <person name="Hernandez J."/>
            <person name="Rabbinowitsch E."/>
            <person name="Steffen D."/>
            <person name="Sanders M."/>
            <person name="Ma J."/>
            <person name="Kohara Y."/>
            <person name="Sharp S."/>
            <person name="Simmonds M.N."/>
            <person name="Spiegler S."/>
            <person name="Tivey A."/>
            <person name="Sugano S."/>
            <person name="White B."/>
            <person name="Walker D."/>
            <person name="Woodward J.R."/>
            <person name="Winckler T."/>
            <person name="Tanaka Y."/>
            <person name="Shaulsky G."/>
            <person name="Schleicher M."/>
            <person name="Weinstock G.M."/>
            <person name="Rosenthal A."/>
            <person name="Cox E.C."/>
            <person name="Chisholm R.L."/>
            <person name="Gibbs R.A."/>
            <person name="Loomis W.F."/>
            <person name="Platzer M."/>
            <person name="Kay R.R."/>
            <person name="Williams J.G."/>
            <person name="Dear P.H."/>
            <person name="Noegel A.A."/>
            <person name="Barrell B.G."/>
            <person name="Kuspa A."/>
        </authorList>
    </citation>
    <scope>NUCLEOTIDE SEQUENCE [LARGE SCALE GENOMIC DNA]</scope>
    <source>
        <strain>AX4</strain>
    </source>
</reference>
<name>HSL32_DICDI</name>
<dbReference type="EMBL" id="AAFI02000039">
    <property type="protein sequence ID" value="EAL66977.1"/>
    <property type="molecule type" value="Genomic_DNA"/>
</dbReference>
<dbReference type="RefSeq" id="XP_640955.1">
    <property type="nucleotide sequence ID" value="XM_635863.1"/>
</dbReference>
<dbReference type="PaxDb" id="44689-DDB0232089"/>
<dbReference type="EnsemblProtists" id="EAL66977">
    <property type="protein sequence ID" value="EAL66977"/>
    <property type="gene ID" value="DDB_G0280871"/>
</dbReference>
<dbReference type="GeneID" id="8622759"/>
<dbReference type="KEGG" id="ddi:DDB_G0280871"/>
<dbReference type="dictyBase" id="DDB_G0280871"/>
<dbReference type="HOGENOM" id="CLU_181850_0_0_1"/>
<dbReference type="InParanoid" id="Q54UR6"/>
<dbReference type="PRO" id="PR:Q54UR6"/>
<dbReference type="Proteomes" id="UP000002195">
    <property type="component" value="Chromosome 3"/>
</dbReference>
<dbReference type="GO" id="GO:0030587">
    <property type="term" value="P:sorocarp development"/>
    <property type="evidence" value="ECO:0000318"/>
    <property type="project" value="GO_Central"/>
</dbReference>
<dbReference type="InterPro" id="IPR008455">
    <property type="entry name" value="HssA/B-related"/>
</dbReference>
<dbReference type="Pfam" id="PF05710">
    <property type="entry name" value="Coiled"/>
    <property type="match status" value="1"/>
</dbReference>
<comment type="similarity">
    <text evidence="2">Belongs to the hssA/B family.</text>
</comment>
<accession>Q54UR6</accession>
<keyword id="KW-1185">Reference proteome</keyword>
<proteinExistence type="inferred from homology"/>
<gene>
    <name type="primary">hssl32</name>
    <name type="ORF">DDB_G0280871</name>
</gene>
<organism>
    <name type="scientific">Dictyostelium discoideum</name>
    <name type="common">Social amoeba</name>
    <dbReference type="NCBI Taxonomy" id="44689"/>
    <lineage>
        <taxon>Eukaryota</taxon>
        <taxon>Amoebozoa</taxon>
        <taxon>Evosea</taxon>
        <taxon>Eumycetozoa</taxon>
        <taxon>Dictyostelia</taxon>
        <taxon>Dictyosteliales</taxon>
        <taxon>Dictyosteliaceae</taxon>
        <taxon>Dictyostelium</taxon>
    </lineage>
</organism>
<protein>
    <recommendedName>
        <fullName>HssA/B-like protein 32</fullName>
    </recommendedName>
</protein>